<name>LTP_VZVD</name>
<reference key="1">
    <citation type="journal article" date="1986" name="J. Gen. Virol.">
        <title>The complete DNA sequence of varicella-zoster virus.</title>
        <authorList>
            <person name="Davison A.J."/>
            <person name="Scott J.E."/>
        </authorList>
    </citation>
    <scope>NUCLEOTIDE SEQUENCE [LARGE SCALE GENOMIC DNA]</scope>
</reference>
<comment type="function">
    <text evidence="1">Large tegument protein that plays multiple roles in the viral cycle. During viral entry, remains associated with the capsid while most of the tegument is detached and participates in the capsid transport toward the host nucleus. Plays a role in the routing of the capsid at the nuclear pore complex and subsequent uncoating. Within the host nucleus, acts as a deneddylase and promotes the degradation of nuclear CRLs (cullin-RING ubiquitin ligases) and thereby stabilizes nuclear CRL substrates, while cytoplasmic CRLs remain unaffected. These modifications prevent host cell cycle S-phase progression and create a favorable environment allowing efficient viral genome replication. Participates later in the secondary envelopment of capsids. Indeed, plays a linker role for the association of the outer viral tegument to the capsids together with the inner tegument protein.</text>
</comment>
<comment type="catalytic activity">
    <reaction evidence="1">
        <text>Thiol-dependent hydrolysis of ester, thioester, amide, peptide and isopeptide bonds formed by the C-terminal Gly of ubiquitin (a 76-residue protein attached to proteins as an intracellular targeting signal).</text>
        <dbReference type="EC" id="3.4.19.12"/>
    </reaction>
</comment>
<comment type="subunit">
    <text evidence="1">Interacts with host CUL1 and CUL4A; these interactions inhibit the E3 ligase activity of cullins. Interacts with inner tegument protein. Interacts with capsid vertex specific component CVC2. Interacts with the major capsid protein/MCP.</text>
</comment>
<comment type="subcellular location">
    <subcellularLocation>
        <location evidence="1">Virion tegument</location>
    </subcellularLocation>
    <subcellularLocation>
        <location evidence="1">Host cytoplasm</location>
    </subcellularLocation>
    <subcellularLocation>
        <location evidence="1">Host nucleus</location>
    </subcellularLocation>
    <text evidence="1">Tightly associated with the capsid.</text>
</comment>
<comment type="similarity">
    <text evidence="1">Belongs to the herpesviridae large tegument protein family.</text>
</comment>
<sequence>MDIIPPIAVTVAGVGSRNQFDGALGPASGLSCLRTSLSFLHMTYAHGINATLSSDMIDGCLQEGAAWTTDLSNMGRGVPDMCALVDLPNRISYIKLGDTTSTCCVLSRIYGDSHFFTVPDEGFMCTQIPARAFFDDVWMGREESYTIITVDSTGMAIYRQGNISFIFDPHGHGTIGQAVVVRVNTTDVYSYIASEYTHRPDNVESQWAAALVFFVTANDGPVSEEALSSAVTLIYGSCDTYFTDEQYCEKLVTAQHPLLLSPPNSTTIVLNKSSIVPLHQNVGESVSLEATLHSTLTNTVALDPRCSYSEVDPWHAVLETTSTGSGVLDCRRRRRPSWTPPSSEENLACIDDGLVNNTHSTDNLHKPAKKVLKFKPTVDVPDKTQVAHVLPRLREVANTPDVVLNVSNVDTPESSPTFSRNMNVGSSLKDRKPFLFEQSGDVNMVVEKLLQHGHEISNGYVQNAVGTLDTVITGHTNVPIWVTRPLVMPDEKDPLELFINLTILRLTGFVVENGTRTHHGATSVVSDFIGPLGEILTGFPSAAELIRVTSLILTNMPGAEYAIKTVLRKKCTIGMLIIAKFGLVAMRVQDTTGALHAELDVLEADLGGSSPIDLYSRLSTGLISILNSPIISHPGLFAELIPTRTGSLSERIRLLCELVSARETRYMREHTALVSSVKALENALRSTRNKIDAIQIPEVPQEPPEETDIPPEELIRRVYEIRSEVTMLLTSAVTEYFTRGVLYSTRALIAEQSPRRFRVATASTAPIQRLLDSLPEFDAKLTAIISSLSIHPPPETIQNLPVVSLLKELIKEGEDLNTDTALVSWLSVVGEAQTAGYLSRREFDELSRTIKTINTRATQRASAEAELSCFNTLSAAVDQAVKDYETYNNGEVKYPEITRDDLLATIVRATDDLVRQIKILSDPMIQSGLQPSIKRRLETRLKEVQTYANEARTTQDTIKSRKQAAYNKLGGLLRPVTGFVGLRAAVDLLPELASELDVQGALVNLRTKVLEAPVEIRSQLTGDFWALFNQYRDILEHPGNARTSVLGGLGACFTAIIEIVPIPTEYRPSLLAFFGDVADVLASDIATVSTNPESESAINAVVATLSKATLVSSTVPALSFVLSLYKKYQALQQEITNTHKLTELQKQLGDDFSTLAVSSGHLKFISSSNVDDYEINDAILSIQTNVHALMDTVKLVEVELQKLPPHCIAGTSTLSRVVKDLHKLVTMAHEKKEQAKVLITDCERAHKQQTTRVLYERWTRDIIACLEAMETRHIFNGTELARLRDMAAAGGFDIHAVYPQARQVVAACETTAVTALDTVFRHNPYTPENTNIPPPLALLRGLTWFDDFSITAPVFTVMFPGVSIEGLLLLMRIRAVVLLSADTSINGIPNYRDMILRTSGDLLQIPALAGYVDFYTRSYDQFITESVTLSELRADIRQAAGAKLTEANKALEEVTHVRAHETAKLALKEGVFITLPSEGLLIRAIEYFTTFDHKRFIGTAYERVLQTMVDRDLKEANAELAQFRMVCQATKNRAIQILQNIVDTANATEQQEDVDFTNLKTLLKLTPPPKTIALAIDRSTSVQDIVTQFALLLGRLEEETGTLDIQAVDWMYQARNIIDSHPLSVRIDGTGPLHTYKDRVDKLYALRTKLDLLRRRIETGEVTWDDAWTTFKRETGDMLASGDTYATSVDSIKALQASASVVDMLCSEPEFFLLPVETKNRLQKKQQERKTALDVVLQKQRQFEETASRLRALIERIPTESDHDVLRMLLRDFDQFTHLPIWIKTQYMTFRNLLMVRLGLYASYAEIFPPASPNGVFAPIPAMSGVCLEDQSRCIRARVAAFMGEASVVQTFREARSSIDALFGKNLTFYLDTDGVPLRYRVCYKSVGVKLGTMLCSQGGLSLRPALPDEGIVEETTLSALRVANEVNELRIEYESAIKSGFSAFSTFVRHRHAEWGKTNARRAIAEIYAGLITTTLTRQYGVHWDKLIYSFEKHHLTSVMGNGLTKPIQRRGDVRVLELTLSDIVTILVATTPVHLLNFARLDLIKQHEYMARTLRPVIEAAFRGRLLVRSLDGDPKGNARAFFNAAPSKHKLPLALGSNQDPTGGRIFAFRMADWKLVKMPQKITDPFAPWQLSPPPGVKANVDAVTRIMATDRLATITVLGRMCLPPISLVSMWNTLQPEEFAYRTQDDVDIIVDARLDLSSTLNARFDTAPSNTTLEWNTDRKVITDAYIQTGATTVFTVTGAAPTHVSNVTAFDIATTAILFGAPLVIAMELTSVFSQNSGLTLGLKLFDSRHMATDSGISSAVSPDIVSWGLRLLHMDPHPIENACLIVQLEKLSALIANKPLTNNPPCLLLLDEHMNPSYVLWERKDSIPAPDYVVFWGPESLIDLPYIDSDEDSFPSCPDDPFYSQIIAGYAPQGPPNLDTTDFYPTEPLFKSPVQVVRSSKCKKMPVRPAQPAQPAQPAQPAQTVQPAQPIEPGTQIVVQNFKKPQSVKTTLSQKDIPLYVETESETAVLIPKQLTTSIKTTVCKSITPPNNQLSDWKNNPQQNQTLNQAFSKPILEITSIPTDDSISYRTWIEKSNQTQKRHQNDPRMYNSKTVFHPVNNQLPSWVDTAADAPQTDLLTNYKTRQPSPNFPRDVHTWGVSSNPFNSPNRDLYQSDFSEPSDGYSSESENSIVLSLDEHRSCRVPRHVRVVNADVVTGRRYVRGTALGALALLSQACRRMIDNVRYTRKLLMDHTEDIFQGLGYVKLLLDGTYI</sequence>
<accession>P09278</accession>
<feature type="chain" id="PRO_0000116037" description="Large tegument protein deneddylase">
    <location>
        <begin position="1"/>
        <end position="2763"/>
    </location>
</feature>
<feature type="domain" description="Peptidase C76" evidence="1">
    <location>
        <begin position="12"/>
        <end position="237"/>
    </location>
</feature>
<feature type="repeat" description="1">
    <location>
        <begin position="2458"/>
        <end position="2460"/>
    </location>
</feature>
<feature type="repeat" description="2">
    <location>
        <begin position="2461"/>
        <end position="2463"/>
    </location>
</feature>
<feature type="repeat" description="3">
    <location>
        <begin position="2464"/>
        <end position="2466"/>
    </location>
</feature>
<feature type="repeat" description="4">
    <location>
        <begin position="2467"/>
        <end position="2469"/>
    </location>
</feature>
<feature type="repeat" description="5">
    <location>
        <begin position="2470"/>
        <end position="2472"/>
    </location>
</feature>
<feature type="region of interest" description="Deubiquitination activity" evidence="1">
    <location>
        <begin position="1"/>
        <end position="247"/>
    </location>
</feature>
<feature type="region of interest" description="Interaction with inner tegument protein" evidence="1">
    <location>
        <begin position="495"/>
        <end position="523"/>
    </location>
</feature>
<feature type="region of interest" description="Disordered" evidence="2">
    <location>
        <begin position="2456"/>
        <end position="2476"/>
    </location>
</feature>
<feature type="region of interest" description="5 X 3 AA repeats of P-A-Q">
    <location>
        <begin position="2458"/>
        <end position="2472"/>
    </location>
</feature>
<feature type="compositionally biased region" description="Low complexity" evidence="2">
    <location>
        <begin position="2459"/>
        <end position="2476"/>
    </location>
</feature>
<feature type="active site" evidence="1">
    <location>
        <position position="32"/>
    </location>
</feature>
<feature type="active site" evidence="1">
    <location>
        <position position="168"/>
    </location>
</feature>
<feature type="active site" evidence="1">
    <location>
        <position position="170"/>
    </location>
</feature>
<feature type="site" description="Important for catalytic activity" evidence="1">
    <location>
        <position position="19"/>
    </location>
</feature>
<dbReference type="EC" id="3.4.19.12" evidence="1"/>
<dbReference type="EC" id="3.4.22.-" evidence="1"/>
<dbReference type="EMBL" id="X04370">
    <property type="protein sequence ID" value="CAA27905.1"/>
    <property type="molecule type" value="Genomic_DNA"/>
</dbReference>
<dbReference type="PIR" id="D27343">
    <property type="entry name" value="WZBE22"/>
</dbReference>
<dbReference type="SMR" id="P09278"/>
<dbReference type="Proteomes" id="UP000002602">
    <property type="component" value="Genome"/>
</dbReference>
<dbReference type="GO" id="GO:0030430">
    <property type="term" value="C:host cell cytoplasm"/>
    <property type="evidence" value="ECO:0007669"/>
    <property type="project" value="UniProtKB-SubCell"/>
</dbReference>
<dbReference type="GO" id="GO:0042025">
    <property type="term" value="C:host cell nucleus"/>
    <property type="evidence" value="ECO:0007669"/>
    <property type="project" value="UniProtKB-SubCell"/>
</dbReference>
<dbReference type="GO" id="GO:0019033">
    <property type="term" value="C:viral tegument"/>
    <property type="evidence" value="ECO:0007669"/>
    <property type="project" value="UniProtKB-SubCell"/>
</dbReference>
<dbReference type="GO" id="GO:0004843">
    <property type="term" value="F:cysteine-type deubiquitinase activity"/>
    <property type="evidence" value="ECO:0007669"/>
    <property type="project" value="UniProtKB-EC"/>
</dbReference>
<dbReference type="GO" id="GO:0019784">
    <property type="term" value="F:deNEDDylase activity"/>
    <property type="evidence" value="ECO:0007669"/>
    <property type="project" value="InterPro"/>
</dbReference>
<dbReference type="GO" id="GO:0006508">
    <property type="term" value="P:proteolysis"/>
    <property type="evidence" value="ECO:0007669"/>
    <property type="project" value="UniProtKB-KW"/>
</dbReference>
<dbReference type="GO" id="GO:0039648">
    <property type="term" value="P:symbiont-mediated perturbation of host ubiquitin-like protein modification"/>
    <property type="evidence" value="ECO:0007669"/>
    <property type="project" value="UniProtKB-KW"/>
</dbReference>
<dbReference type="GO" id="GO:0039693">
    <property type="term" value="P:viral DNA genome replication"/>
    <property type="evidence" value="ECO:0007669"/>
    <property type="project" value="InterPro"/>
</dbReference>
<dbReference type="Gene3D" id="3.90.70.120">
    <property type="match status" value="1"/>
</dbReference>
<dbReference type="HAMAP" id="MF_04044">
    <property type="entry name" value="HSV_LTP"/>
    <property type="match status" value="1"/>
</dbReference>
<dbReference type="InterPro" id="IPR005210">
    <property type="entry name" value="Herpes_LT_deneddylase"/>
</dbReference>
<dbReference type="InterPro" id="IPR006928">
    <property type="entry name" value="Herpes_teg_USP"/>
</dbReference>
<dbReference type="InterPro" id="IPR034702">
    <property type="entry name" value="HSV_LTP"/>
</dbReference>
<dbReference type="InterPro" id="IPR038765">
    <property type="entry name" value="Papain-like_cys_pep_sf"/>
</dbReference>
<dbReference type="Pfam" id="PF04843">
    <property type="entry name" value="Herpes_teg_N"/>
    <property type="match status" value="1"/>
</dbReference>
<dbReference type="Pfam" id="PF03586">
    <property type="entry name" value="Herpes_UL36"/>
    <property type="match status" value="1"/>
</dbReference>
<dbReference type="SUPFAM" id="SSF54001">
    <property type="entry name" value="Cysteine proteinases"/>
    <property type="match status" value="1"/>
</dbReference>
<dbReference type="PROSITE" id="PS00116">
    <property type="entry name" value="DNA_POLYMERASE_B"/>
    <property type="match status" value="1"/>
</dbReference>
<dbReference type="PROSITE" id="PS51521">
    <property type="entry name" value="HTUSP"/>
    <property type="match status" value="1"/>
</dbReference>
<organismHost>
    <name type="scientific">Homo sapiens</name>
    <name type="common">Human</name>
    <dbReference type="NCBI Taxonomy" id="9606"/>
</organismHost>
<organism>
    <name type="scientific">Varicella-zoster virus (strain Dumas)</name>
    <name type="common">HHV-3</name>
    <name type="synonym">Human herpesvirus 3</name>
    <dbReference type="NCBI Taxonomy" id="10338"/>
    <lineage>
        <taxon>Viruses</taxon>
        <taxon>Duplodnaviria</taxon>
        <taxon>Heunggongvirae</taxon>
        <taxon>Peploviricota</taxon>
        <taxon>Herviviricetes</taxon>
        <taxon>Herpesvirales</taxon>
        <taxon>Orthoherpesviridae</taxon>
        <taxon>Alphaherpesvirinae</taxon>
        <taxon>Varicellovirus</taxon>
        <taxon>Varicellovirus humanalpha3</taxon>
        <taxon>Human herpesvirus 3</taxon>
    </lineage>
</organism>
<evidence type="ECO:0000255" key="1">
    <source>
        <dbReference type="HAMAP-Rule" id="MF_04044"/>
    </source>
</evidence>
<evidence type="ECO:0000256" key="2">
    <source>
        <dbReference type="SAM" id="MobiDB-lite"/>
    </source>
</evidence>
<gene>
    <name type="ORF">ORF22</name>
</gene>
<protein>
    <recommendedName>
        <fullName evidence="1">Large tegument protein deneddylase</fullName>
        <ecNumber evidence="1">3.4.19.12</ecNumber>
        <ecNumber evidence="1">3.4.22.-</ecNumber>
    </recommendedName>
</protein>
<proteinExistence type="inferred from homology"/>
<keyword id="KW-1035">Host cytoplasm</keyword>
<keyword id="KW-1048">Host nucleus</keyword>
<keyword id="KW-0945">Host-virus interaction</keyword>
<keyword id="KW-0378">Hydrolase</keyword>
<keyword id="KW-1127">Modulation of host ubiquitin pathway by viral deubiquitinase</keyword>
<keyword id="KW-1130">Modulation of host ubiquitin pathway by virus</keyword>
<keyword id="KW-0645">Protease</keyword>
<keyword id="KW-1185">Reference proteome</keyword>
<keyword id="KW-0677">Repeat</keyword>
<keyword id="KW-0788">Thiol protease</keyword>
<keyword id="KW-0833">Ubl conjugation pathway</keyword>
<keyword id="KW-0946">Virion</keyword>
<keyword id="KW-0920">Virion tegument</keyword>